<sequence>MRVKAPGRINIIGEHTDYNDGYVLPFAVNRFVFLTIEDSGKFVFHSENMNETVEMEKIEKLNRWTDYISGVIKAFEKRGYKVSPVKISVSSNLPMGAGLSSSAALEMATAYAISEHFGFHLPKLELVKIAREAEVEFVGVRCGIMDQFTSAFGKKDHAIFLDTMTLEYEYVPLKLEGYEINLVDSNVKHELSSSEYNKRRQECEEVLRVLGKRSFREVTKEDLKKLPDVLKKRAQHVLEENERVLKSVQALKEGDFETLGRLLFSSHESLRDLYEVSCEQTDFIVDFLKGREGILGARMVGGGFGGGVIVLSKKGAFEKIKEELKNAYRDRFKIELTFHEIESADGVQKI</sequence>
<protein>
    <recommendedName>
        <fullName evidence="1">Galactokinase</fullName>
        <ecNumber evidence="1">2.7.1.6</ecNumber>
    </recommendedName>
    <alternativeName>
        <fullName evidence="1">Galactose kinase</fullName>
    </alternativeName>
</protein>
<comment type="function">
    <text evidence="1">Catalyzes the transfer of the gamma-phosphate of ATP to D-galactose to form alpha-D-galactose-1-phosphate (Gal-1-P).</text>
</comment>
<comment type="catalytic activity">
    <reaction evidence="1">
        <text>alpha-D-galactose + ATP = alpha-D-galactose 1-phosphate + ADP + H(+)</text>
        <dbReference type="Rhea" id="RHEA:13553"/>
        <dbReference type="ChEBI" id="CHEBI:15378"/>
        <dbReference type="ChEBI" id="CHEBI:28061"/>
        <dbReference type="ChEBI" id="CHEBI:30616"/>
        <dbReference type="ChEBI" id="CHEBI:58336"/>
        <dbReference type="ChEBI" id="CHEBI:456216"/>
        <dbReference type="EC" id="2.7.1.6"/>
    </reaction>
</comment>
<comment type="pathway">
    <text evidence="1">Carbohydrate metabolism; galactose metabolism.</text>
</comment>
<comment type="subcellular location">
    <subcellularLocation>
        <location evidence="1">Cytoplasm</location>
    </subcellularLocation>
</comment>
<comment type="similarity">
    <text evidence="1">Belongs to the GHMP kinase family. GalK subfamily.</text>
</comment>
<accession>O85253</accession>
<dbReference type="EC" id="2.7.1.6" evidence="1"/>
<dbReference type="EMBL" id="AF055482">
    <property type="protein sequence ID" value="AAC24222.1"/>
    <property type="molecule type" value="Genomic_DNA"/>
</dbReference>
<dbReference type="SMR" id="O85253"/>
<dbReference type="UniPathway" id="UPA00214"/>
<dbReference type="GO" id="GO:0005829">
    <property type="term" value="C:cytosol"/>
    <property type="evidence" value="ECO:0007669"/>
    <property type="project" value="TreeGrafter"/>
</dbReference>
<dbReference type="GO" id="GO:0005524">
    <property type="term" value="F:ATP binding"/>
    <property type="evidence" value="ECO:0007669"/>
    <property type="project" value="UniProtKB-UniRule"/>
</dbReference>
<dbReference type="GO" id="GO:0004335">
    <property type="term" value="F:galactokinase activity"/>
    <property type="evidence" value="ECO:0007669"/>
    <property type="project" value="UniProtKB-UniRule"/>
</dbReference>
<dbReference type="GO" id="GO:0000287">
    <property type="term" value="F:magnesium ion binding"/>
    <property type="evidence" value="ECO:0007669"/>
    <property type="project" value="UniProtKB-UniRule"/>
</dbReference>
<dbReference type="GO" id="GO:0006012">
    <property type="term" value="P:galactose metabolic process"/>
    <property type="evidence" value="ECO:0007669"/>
    <property type="project" value="UniProtKB-UniRule"/>
</dbReference>
<dbReference type="FunFam" id="3.30.230.10:FF:000126">
    <property type="entry name" value="Galactokinase"/>
    <property type="match status" value="1"/>
</dbReference>
<dbReference type="FunFam" id="3.30.70.890:FF:000001">
    <property type="entry name" value="Galactokinase"/>
    <property type="match status" value="1"/>
</dbReference>
<dbReference type="Gene3D" id="3.30.230.10">
    <property type="match status" value="1"/>
</dbReference>
<dbReference type="Gene3D" id="3.30.70.890">
    <property type="entry name" value="GHMP kinase, C-terminal domain"/>
    <property type="match status" value="1"/>
</dbReference>
<dbReference type="HAMAP" id="MF_00246">
    <property type="entry name" value="Galactokinase"/>
    <property type="match status" value="1"/>
</dbReference>
<dbReference type="InterPro" id="IPR000705">
    <property type="entry name" value="Galactokinase"/>
</dbReference>
<dbReference type="InterPro" id="IPR022963">
    <property type="entry name" value="Galactokinase_bac"/>
</dbReference>
<dbReference type="InterPro" id="IPR019741">
    <property type="entry name" value="Galactokinase_CS"/>
</dbReference>
<dbReference type="InterPro" id="IPR019539">
    <property type="entry name" value="GalKase_N"/>
</dbReference>
<dbReference type="InterPro" id="IPR013750">
    <property type="entry name" value="GHMP_kinase_C_dom"/>
</dbReference>
<dbReference type="InterPro" id="IPR036554">
    <property type="entry name" value="GHMP_kinase_C_sf"/>
</dbReference>
<dbReference type="InterPro" id="IPR006204">
    <property type="entry name" value="GHMP_kinase_N_dom"/>
</dbReference>
<dbReference type="InterPro" id="IPR006203">
    <property type="entry name" value="GHMP_knse_ATP-bd_CS"/>
</dbReference>
<dbReference type="InterPro" id="IPR006206">
    <property type="entry name" value="Mevalonate/galactokinase"/>
</dbReference>
<dbReference type="InterPro" id="IPR020568">
    <property type="entry name" value="Ribosomal_Su5_D2-typ_SF"/>
</dbReference>
<dbReference type="InterPro" id="IPR014721">
    <property type="entry name" value="Ribsml_uS5_D2-typ_fold_subgr"/>
</dbReference>
<dbReference type="NCBIfam" id="TIGR00131">
    <property type="entry name" value="gal_kin"/>
    <property type="match status" value="1"/>
</dbReference>
<dbReference type="NCBIfam" id="NF003006">
    <property type="entry name" value="PRK03817.1"/>
    <property type="match status" value="1"/>
</dbReference>
<dbReference type="PANTHER" id="PTHR10457:SF7">
    <property type="entry name" value="GALACTOKINASE-RELATED"/>
    <property type="match status" value="1"/>
</dbReference>
<dbReference type="PANTHER" id="PTHR10457">
    <property type="entry name" value="MEVALONATE KINASE/GALACTOKINASE"/>
    <property type="match status" value="1"/>
</dbReference>
<dbReference type="Pfam" id="PF10509">
    <property type="entry name" value="GalKase_gal_bdg"/>
    <property type="match status" value="1"/>
</dbReference>
<dbReference type="Pfam" id="PF08544">
    <property type="entry name" value="GHMP_kinases_C"/>
    <property type="match status" value="1"/>
</dbReference>
<dbReference type="Pfam" id="PF00288">
    <property type="entry name" value="GHMP_kinases_N"/>
    <property type="match status" value="1"/>
</dbReference>
<dbReference type="PIRSF" id="PIRSF000530">
    <property type="entry name" value="Galactokinase"/>
    <property type="match status" value="1"/>
</dbReference>
<dbReference type="PRINTS" id="PR00473">
    <property type="entry name" value="GALCTOKINASE"/>
</dbReference>
<dbReference type="PRINTS" id="PR00959">
    <property type="entry name" value="MEVGALKINASE"/>
</dbReference>
<dbReference type="SUPFAM" id="SSF55060">
    <property type="entry name" value="GHMP Kinase, C-terminal domain"/>
    <property type="match status" value="1"/>
</dbReference>
<dbReference type="SUPFAM" id="SSF54211">
    <property type="entry name" value="Ribosomal protein S5 domain 2-like"/>
    <property type="match status" value="1"/>
</dbReference>
<dbReference type="PROSITE" id="PS00106">
    <property type="entry name" value="GALACTOKINASE"/>
    <property type="match status" value="1"/>
</dbReference>
<dbReference type="PROSITE" id="PS00627">
    <property type="entry name" value="GHMP_KINASES_ATP"/>
    <property type="match status" value="1"/>
</dbReference>
<gene>
    <name evidence="1" type="primary">galK</name>
</gene>
<proteinExistence type="inferred from homology"/>
<evidence type="ECO:0000255" key="1">
    <source>
        <dbReference type="HAMAP-Rule" id="MF_00246"/>
    </source>
</evidence>
<keyword id="KW-0067">ATP-binding</keyword>
<keyword id="KW-0119">Carbohydrate metabolism</keyword>
<keyword id="KW-0963">Cytoplasm</keyword>
<keyword id="KW-0299">Galactose metabolism</keyword>
<keyword id="KW-0418">Kinase</keyword>
<keyword id="KW-0460">Magnesium</keyword>
<keyword id="KW-0479">Metal-binding</keyword>
<keyword id="KW-0547">Nucleotide-binding</keyword>
<keyword id="KW-0808">Transferase</keyword>
<reference key="1">
    <citation type="submission" date="1998-03" db="EMBL/GenBank/DDBJ databases">
        <title>Molecular Characterization of a galactose utilization operon in Thermotoga neapolitana.</title>
        <authorList>
            <person name="Swiatek G.C."/>
            <person name="Yernool D.A."/>
            <person name="King M."/>
            <person name="Chassy B."/>
            <person name="Eveleigh D.E."/>
        </authorList>
    </citation>
    <scope>NUCLEOTIDE SEQUENCE [GENOMIC DNA]</scope>
</reference>
<name>GAL1_THENE</name>
<organism>
    <name type="scientific">Thermotoga neapolitana</name>
    <dbReference type="NCBI Taxonomy" id="2337"/>
    <lineage>
        <taxon>Bacteria</taxon>
        <taxon>Thermotogati</taxon>
        <taxon>Thermotogota</taxon>
        <taxon>Thermotogae</taxon>
        <taxon>Thermotogales</taxon>
        <taxon>Thermotogaceae</taxon>
        <taxon>Thermotoga</taxon>
    </lineage>
</organism>
<feature type="chain" id="PRO_0000184632" description="Galactokinase">
    <location>
        <begin position="1"/>
        <end position="350"/>
    </location>
</feature>
<feature type="active site" description="Proton acceptor" evidence="1">
    <location>
        <position position="146"/>
    </location>
</feature>
<feature type="binding site" evidence="1">
    <location>
        <begin position="14"/>
        <end position="17"/>
    </location>
    <ligand>
        <name>substrate</name>
    </ligand>
</feature>
<feature type="binding site" evidence="1">
    <location>
        <position position="46"/>
    </location>
    <ligand>
        <name>ATP</name>
        <dbReference type="ChEBI" id="CHEBI:30616"/>
    </ligand>
</feature>
<feature type="binding site" evidence="1">
    <location>
        <begin position="96"/>
        <end position="102"/>
    </location>
    <ligand>
        <name>ATP</name>
        <dbReference type="ChEBI" id="CHEBI:30616"/>
    </ligand>
</feature>
<feature type="binding site" evidence="1">
    <location>
        <position position="102"/>
    </location>
    <ligand>
        <name>Mg(2+)</name>
        <dbReference type="ChEBI" id="CHEBI:18420"/>
    </ligand>
</feature>
<feature type="binding site" evidence="1">
    <location>
        <position position="134"/>
    </location>
    <ligand>
        <name>Mg(2+)</name>
        <dbReference type="ChEBI" id="CHEBI:18420"/>
    </ligand>
</feature>
<feature type="binding site" evidence="1">
    <location>
        <position position="196"/>
    </location>
    <ligand>
        <name>substrate</name>
    </ligand>
</feature>
<feature type="site" description="Transition state stabilizer" evidence="1">
    <location>
        <position position="8"/>
    </location>
</feature>